<accession>Q2JRH8</accession>
<evidence type="ECO:0000255" key="1">
    <source>
        <dbReference type="HAMAP-Rule" id="MF_00432"/>
    </source>
</evidence>
<organism>
    <name type="scientific">Synechococcus sp. (strain JA-3-3Ab)</name>
    <name type="common">Cyanobacteria bacterium Yellowstone A-Prime</name>
    <dbReference type="NCBI Taxonomy" id="321327"/>
    <lineage>
        <taxon>Bacteria</taxon>
        <taxon>Bacillati</taxon>
        <taxon>Cyanobacteriota</taxon>
        <taxon>Cyanophyceae</taxon>
        <taxon>Synechococcales</taxon>
        <taxon>Synechococcaceae</taxon>
        <taxon>Synechococcus</taxon>
    </lineage>
</organism>
<gene>
    <name evidence="1" type="primary">petG</name>
    <name type="ordered locus">CYA_2664</name>
</gene>
<sequence length="37" mass="4050">MIEPILLGIVLGMVLVTLAGLFVAAYRQYQRGNKMGL</sequence>
<proteinExistence type="inferred from homology"/>
<keyword id="KW-0249">Electron transport</keyword>
<keyword id="KW-0472">Membrane</keyword>
<keyword id="KW-0602">Photosynthesis</keyword>
<keyword id="KW-0793">Thylakoid</keyword>
<keyword id="KW-0812">Transmembrane</keyword>
<keyword id="KW-1133">Transmembrane helix</keyword>
<keyword id="KW-0813">Transport</keyword>
<dbReference type="EMBL" id="CP000239">
    <property type="protein sequence ID" value="ABD00776.1"/>
    <property type="molecule type" value="Genomic_DNA"/>
</dbReference>
<dbReference type="RefSeq" id="WP_011431447.1">
    <property type="nucleotide sequence ID" value="NC_007775.1"/>
</dbReference>
<dbReference type="SMR" id="Q2JRH8"/>
<dbReference type="STRING" id="321327.CYA_2664"/>
<dbReference type="KEGG" id="cya:CYA_2664"/>
<dbReference type="HOGENOM" id="CLU_216962_0_0_3"/>
<dbReference type="Proteomes" id="UP000008818">
    <property type="component" value="Chromosome"/>
</dbReference>
<dbReference type="GO" id="GO:0009512">
    <property type="term" value="C:cytochrome b6f complex"/>
    <property type="evidence" value="ECO:0007669"/>
    <property type="project" value="InterPro"/>
</dbReference>
<dbReference type="GO" id="GO:0031676">
    <property type="term" value="C:plasma membrane-derived thylakoid membrane"/>
    <property type="evidence" value="ECO:0007669"/>
    <property type="project" value="UniProtKB-SubCell"/>
</dbReference>
<dbReference type="GO" id="GO:0045158">
    <property type="term" value="F:electron transporter, transferring electrons within cytochrome b6/f complex of photosystem II activity"/>
    <property type="evidence" value="ECO:0007669"/>
    <property type="project" value="UniProtKB-UniRule"/>
</dbReference>
<dbReference type="GO" id="GO:0017004">
    <property type="term" value="P:cytochrome complex assembly"/>
    <property type="evidence" value="ECO:0007669"/>
    <property type="project" value="UniProtKB-UniRule"/>
</dbReference>
<dbReference type="GO" id="GO:0015979">
    <property type="term" value="P:photosynthesis"/>
    <property type="evidence" value="ECO:0007669"/>
    <property type="project" value="UniProtKB-KW"/>
</dbReference>
<dbReference type="HAMAP" id="MF_00432">
    <property type="entry name" value="Cytb6_f_PetG"/>
    <property type="match status" value="1"/>
</dbReference>
<dbReference type="InterPro" id="IPR003683">
    <property type="entry name" value="Cyt_6/f_cplx_su5"/>
</dbReference>
<dbReference type="InterPro" id="IPR036099">
    <property type="entry name" value="Cyt_6/f_cplx_su5_sf"/>
</dbReference>
<dbReference type="NCBIfam" id="NF001907">
    <property type="entry name" value="PRK00665.1"/>
    <property type="match status" value="1"/>
</dbReference>
<dbReference type="Pfam" id="PF02529">
    <property type="entry name" value="PetG"/>
    <property type="match status" value="1"/>
</dbReference>
<dbReference type="PIRSF" id="PIRSF000034">
    <property type="entry name" value="Cyt_b6-f_V"/>
    <property type="match status" value="1"/>
</dbReference>
<dbReference type="SUPFAM" id="SSF103446">
    <property type="entry name" value="PetG subunit of the cytochrome b6f complex"/>
    <property type="match status" value="1"/>
</dbReference>
<protein>
    <recommendedName>
        <fullName evidence="1">Cytochrome b6-f complex subunit 5</fullName>
    </recommendedName>
    <alternativeName>
        <fullName evidence="1">Cytochrome b6-f complex subunit PetG</fullName>
    </alternativeName>
    <alternativeName>
        <fullName evidence="1">Cytochrome b6-f complex subunit V</fullName>
    </alternativeName>
</protein>
<comment type="function">
    <text evidence="1">Component of the cytochrome b6-f complex, which mediates electron transfer between photosystem II (PSII) and photosystem I (PSI), cyclic electron flow around PSI, and state transitions. PetG is required for either the stability or assembly of the cytochrome b6-f complex.</text>
</comment>
<comment type="subunit">
    <text evidence="1">The 4 large subunits of the cytochrome b6-f complex are cytochrome b6, subunit IV (17 kDa polypeptide, PetD), cytochrome f and the Rieske protein, while the 4 small subunits are PetG, PetL, PetM and PetN. The complex functions as a dimer.</text>
</comment>
<comment type="subcellular location">
    <subcellularLocation>
        <location evidence="1">Cellular thylakoid membrane</location>
        <topology evidence="1">Single-pass membrane protein</topology>
    </subcellularLocation>
</comment>
<comment type="similarity">
    <text evidence="1">Belongs to the PetG family.</text>
</comment>
<feature type="chain" id="PRO_1000050396" description="Cytochrome b6-f complex subunit 5">
    <location>
        <begin position="1"/>
        <end position="37"/>
    </location>
</feature>
<feature type="transmembrane region" description="Helical" evidence="1">
    <location>
        <begin position="5"/>
        <end position="25"/>
    </location>
</feature>
<name>PETG_SYNJA</name>
<reference key="1">
    <citation type="journal article" date="2007" name="ISME J.">
        <title>Population level functional diversity in a microbial community revealed by comparative genomic and metagenomic analyses.</title>
        <authorList>
            <person name="Bhaya D."/>
            <person name="Grossman A.R."/>
            <person name="Steunou A.-S."/>
            <person name="Khuri N."/>
            <person name="Cohan F.M."/>
            <person name="Hamamura N."/>
            <person name="Melendrez M.C."/>
            <person name="Bateson M.M."/>
            <person name="Ward D.M."/>
            <person name="Heidelberg J.F."/>
        </authorList>
    </citation>
    <scope>NUCLEOTIDE SEQUENCE [LARGE SCALE GENOMIC DNA]</scope>
    <source>
        <strain>JA-3-3Ab</strain>
    </source>
</reference>